<keyword id="KW-1185">Reference proteome</keyword>
<keyword id="KW-0732">Signal</keyword>
<organism>
    <name type="scientific">Shigella flexneri</name>
    <dbReference type="NCBI Taxonomy" id="623"/>
    <lineage>
        <taxon>Bacteria</taxon>
        <taxon>Pseudomonadati</taxon>
        <taxon>Pseudomonadota</taxon>
        <taxon>Gammaproteobacteria</taxon>
        <taxon>Enterobacterales</taxon>
        <taxon>Enterobacteriaceae</taxon>
        <taxon>Shigella</taxon>
    </lineage>
</organism>
<feature type="signal peptide" evidence="1">
    <location>
        <begin position="1"/>
        <end position="19"/>
    </location>
</feature>
<feature type="chain" id="PRO_0000042574" description="Uncharacterized protein YmgD">
    <location>
        <begin position="20"/>
        <end position="109"/>
    </location>
</feature>
<gene>
    <name type="primary">ymgD</name>
    <name type="ordered locus">SF1157.1</name>
    <name type="ordered locus">S1244</name>
</gene>
<name>YMGD_SHIFL</name>
<evidence type="ECO:0000255" key="1"/>
<evidence type="ECO:0000305" key="2"/>
<reference key="1">
    <citation type="journal article" date="2002" name="Nucleic Acids Res.">
        <title>Genome sequence of Shigella flexneri 2a: insights into pathogenicity through comparison with genomes of Escherichia coli K12 and O157.</title>
        <authorList>
            <person name="Jin Q."/>
            <person name="Yuan Z."/>
            <person name="Xu J."/>
            <person name="Wang Y."/>
            <person name="Shen Y."/>
            <person name="Lu W."/>
            <person name="Wang J."/>
            <person name="Liu H."/>
            <person name="Yang J."/>
            <person name="Yang F."/>
            <person name="Zhang X."/>
            <person name="Zhang J."/>
            <person name="Yang G."/>
            <person name="Wu H."/>
            <person name="Qu D."/>
            <person name="Dong J."/>
            <person name="Sun L."/>
            <person name="Xue Y."/>
            <person name="Zhao A."/>
            <person name="Gao Y."/>
            <person name="Zhu J."/>
            <person name="Kan B."/>
            <person name="Ding K."/>
            <person name="Chen S."/>
            <person name="Cheng H."/>
            <person name="Yao Z."/>
            <person name="He B."/>
            <person name="Chen R."/>
            <person name="Ma D."/>
            <person name="Qiang B."/>
            <person name="Wen Y."/>
            <person name="Hou Y."/>
            <person name="Yu J."/>
        </authorList>
    </citation>
    <scope>NUCLEOTIDE SEQUENCE [LARGE SCALE GENOMIC DNA]</scope>
    <source>
        <strain>301 / Serotype 2a</strain>
    </source>
</reference>
<reference key="2">
    <citation type="journal article" date="2003" name="Infect. Immun.">
        <title>Complete genome sequence and comparative genomics of Shigella flexneri serotype 2a strain 2457T.</title>
        <authorList>
            <person name="Wei J."/>
            <person name="Goldberg M.B."/>
            <person name="Burland V."/>
            <person name="Venkatesan M.M."/>
            <person name="Deng W."/>
            <person name="Fournier G."/>
            <person name="Mayhew G.F."/>
            <person name="Plunkett G. III"/>
            <person name="Rose D.J."/>
            <person name="Darling A."/>
            <person name="Mau B."/>
            <person name="Perna N.T."/>
            <person name="Payne S.M."/>
            <person name="Runyen-Janecky L.J."/>
            <person name="Zhou S."/>
            <person name="Schwartz D.C."/>
            <person name="Blattner F.R."/>
        </authorList>
    </citation>
    <scope>NUCLEOTIDE SEQUENCE [LARGE SCALE GENOMIC DNA]</scope>
    <source>
        <strain>ATCC 700930 / 2457T / Serotype 2a</strain>
    </source>
</reference>
<accession>P0AB48</accession>
<accession>P75998</accession>
<sequence length="109" mass="11852">MKKFALLAGLFVFAPMTWAQDYNIKNGLPSETYITCAEANEMAKTDSAQVAEIVAVMGNASVASRDLKIEQSPELSAKVVEKLNQVCAKDPQMLLITAIDDTMRAIGKK</sequence>
<protein>
    <recommendedName>
        <fullName>Uncharacterized protein YmgD</fullName>
    </recommendedName>
</protein>
<dbReference type="EMBL" id="AE005674">
    <property type="protein sequence ID" value="AAN42775.1"/>
    <property type="status" value="ALT_INIT"/>
    <property type="molecule type" value="Genomic_DNA"/>
</dbReference>
<dbReference type="EMBL" id="AE014073">
    <property type="protein sequence ID" value="AAP16666.1"/>
    <property type="status" value="ALT_INIT"/>
    <property type="molecule type" value="Genomic_DNA"/>
</dbReference>
<dbReference type="RefSeq" id="NP_707068.1">
    <property type="nucleotide sequence ID" value="NC_004337.2"/>
</dbReference>
<dbReference type="BMRB" id="P0AB48"/>
<dbReference type="SMR" id="P0AB48"/>
<dbReference type="PaxDb" id="198214-SF1158"/>
<dbReference type="KEGG" id="sfl:SF1158"/>
<dbReference type="KEGG" id="sfx:S1244"/>
<dbReference type="PATRIC" id="fig|198214.7.peg.1366"/>
<dbReference type="HOGENOM" id="CLU_2194528_0_0_6"/>
<dbReference type="Proteomes" id="UP000001006">
    <property type="component" value="Chromosome"/>
</dbReference>
<dbReference type="Proteomes" id="UP000002673">
    <property type="component" value="Chromosome"/>
</dbReference>
<dbReference type="Gene3D" id="1.10.890.30">
    <property type="entry name" value="YmgD protein"/>
    <property type="match status" value="1"/>
</dbReference>
<dbReference type="InterPro" id="IPR032497">
    <property type="entry name" value="YmgD"/>
</dbReference>
<dbReference type="InterPro" id="IPR038304">
    <property type="entry name" value="YmgD_sf"/>
</dbReference>
<dbReference type="Pfam" id="PF16456">
    <property type="entry name" value="YmgD"/>
    <property type="match status" value="1"/>
</dbReference>
<proteinExistence type="inferred from homology"/>
<comment type="sequence caution" evidence="2">
    <conflict type="erroneous initiation">
        <sequence resource="EMBL-CDS" id="AAN42775"/>
    </conflict>
</comment>
<comment type="sequence caution" evidence="2">
    <conflict type="erroneous initiation">
        <sequence resource="EMBL-CDS" id="AAP16666"/>
    </conflict>
</comment>